<organism>
    <name type="scientific">Trichormus variabilis (strain ATCC 29413 / PCC 7937)</name>
    <name type="common">Anabaena variabilis</name>
    <dbReference type="NCBI Taxonomy" id="240292"/>
    <lineage>
        <taxon>Bacteria</taxon>
        <taxon>Bacillati</taxon>
        <taxon>Cyanobacteriota</taxon>
        <taxon>Cyanophyceae</taxon>
        <taxon>Nostocales</taxon>
        <taxon>Nostocaceae</taxon>
        <taxon>Trichormus</taxon>
    </lineage>
</organism>
<keyword id="KW-0903">Direct protein sequencing</keyword>
<keyword id="KW-0472">Membrane</keyword>
<keyword id="KW-0602">Photosynthesis</keyword>
<keyword id="KW-0603">Photosystem I</keyword>
<keyword id="KW-0793">Thylakoid</keyword>
<keyword id="KW-0812">Transmembrane</keyword>
<keyword id="KW-1133">Transmembrane helix</keyword>
<proteinExistence type="evidence at protein level"/>
<reference key="1">
    <citation type="journal article" date="1992" name="Plant Mol. Biol.">
        <title>Presence of an N-terminal presequence in the PsaI protein of the photosystem I complex in the filamentous cyanobacterium Anabaena variabilis ATCC 29413.</title>
        <authorList>
            <person name="Sonoike K."/>
            <person name="Ikeuchi M."/>
            <person name="Pakrasi H.B."/>
        </authorList>
    </citation>
    <scope>NUCLEOTIDE SEQUENCE [GENOMIC DNA]</scope>
</reference>
<reference key="2">
    <citation type="journal article" date="2014" name="Stand. Genomic Sci.">
        <title>Complete genome sequence of Anabaena variabilis ATCC 29413.</title>
        <authorList>
            <person name="Thiel T."/>
            <person name="Pratte B.S."/>
            <person name="Zhong J."/>
            <person name="Goodwin L."/>
            <person name="Copeland A."/>
            <person name="Lucas S."/>
            <person name="Han C."/>
            <person name="Pitluck S."/>
            <person name="Land M.L."/>
            <person name="Kyrpides N.C."/>
            <person name="Woyke T."/>
        </authorList>
    </citation>
    <scope>NUCLEOTIDE SEQUENCE [LARGE SCALE GENOMIC DNA]</scope>
    <source>
        <strain>ATCC 29413 / PCC 7937</strain>
    </source>
</reference>
<reference key="3">
    <citation type="journal article" date="1991" name="FEBS Lett.">
        <title>Identities of four low-molecular-mass subunits of the photosystem I complex from Anabaena variabilis ATCC 29413. Evidence for the presence of the psaI gene product in a cyanobacterial complex.</title>
        <authorList>
            <person name="Ikeuchi M."/>
            <person name="Nyhus K.J."/>
            <person name="Inoue Y."/>
            <person name="Pakrasi H.B."/>
        </authorList>
    </citation>
    <scope>PROTEIN SEQUENCE OF 12-46</scope>
</reference>
<sequence>MATAFLPSILADASFLSSIFVPVIGWVVPIATFSFLFLYIEGEDVA</sequence>
<feature type="propeptide" id="PRO_0000029422" evidence="3">
    <location>
        <begin position="1"/>
        <end position="11"/>
    </location>
</feature>
<feature type="chain" id="PRO_0000029423" description="Photosystem I reaction center subunit VIII">
    <location>
        <begin position="12"/>
        <end position="46"/>
    </location>
</feature>
<feature type="transmembrane region" description="Helical" evidence="2">
    <location>
        <begin position="20"/>
        <end position="40"/>
    </location>
</feature>
<evidence type="ECO:0000250" key="1"/>
<evidence type="ECO:0000255" key="2"/>
<evidence type="ECO:0000269" key="3">
    <source>
    </source>
</evidence>
<evidence type="ECO:0000305" key="4"/>
<name>PSAI_TRIV2</name>
<gene>
    <name type="primary">psaI</name>
    <name type="ordered locus">Ava_1851.1</name>
</gene>
<comment type="function">
    <text>May help in the organization of the PsaL subunit.</text>
</comment>
<comment type="subcellular location">
    <subcellularLocation>
        <location evidence="1">Cellular thylakoid membrane</location>
        <topology evidence="1">Single-pass membrane protein</topology>
    </subcellularLocation>
</comment>
<comment type="similarity">
    <text evidence="4">Belongs to the PsaI family.</text>
</comment>
<accession>P23079</accession>
<protein>
    <recommendedName>
        <fullName>Photosystem I reaction center subunit VIII</fullName>
    </recommendedName>
</protein>
<dbReference type="EMBL" id="X66864">
    <property type="protein sequence ID" value="CAA47333.1"/>
    <property type="molecule type" value="Genomic_DNA"/>
</dbReference>
<dbReference type="EMBL" id="CP000117">
    <property type="status" value="NOT_ANNOTATED_CDS"/>
    <property type="molecule type" value="Genomic_DNA"/>
</dbReference>
<dbReference type="PIR" id="S28008">
    <property type="entry name" value="S28008"/>
</dbReference>
<dbReference type="SMR" id="P23079"/>
<dbReference type="Proteomes" id="UP000002533">
    <property type="component" value="Chromosome"/>
</dbReference>
<dbReference type="GO" id="GO:0009522">
    <property type="term" value="C:photosystem I"/>
    <property type="evidence" value="ECO:0007669"/>
    <property type="project" value="UniProtKB-KW"/>
</dbReference>
<dbReference type="GO" id="GO:0031676">
    <property type="term" value="C:plasma membrane-derived thylakoid membrane"/>
    <property type="evidence" value="ECO:0007669"/>
    <property type="project" value="UniProtKB-SubCell"/>
</dbReference>
<dbReference type="GO" id="GO:0015979">
    <property type="term" value="P:photosynthesis"/>
    <property type="evidence" value="ECO:0007669"/>
    <property type="project" value="UniProtKB-UniRule"/>
</dbReference>
<dbReference type="HAMAP" id="MF_00431">
    <property type="entry name" value="PSI_PsaI"/>
    <property type="match status" value="1"/>
</dbReference>
<dbReference type="InterPro" id="IPR001302">
    <property type="entry name" value="PSI_PsaI"/>
</dbReference>
<dbReference type="InterPro" id="IPR036357">
    <property type="entry name" value="PSI_PsaI_sf"/>
</dbReference>
<dbReference type="Pfam" id="PF00796">
    <property type="entry name" value="PSI_8"/>
    <property type="match status" value="1"/>
</dbReference>
<dbReference type="SUPFAM" id="SSF81540">
    <property type="entry name" value="Subunit VIII of photosystem I reaction centre, PsaI"/>
    <property type="match status" value="1"/>
</dbReference>